<accession>A6WJ16</accession>
<comment type="function">
    <text evidence="1">Together with the chaperonin GroEL, plays an essential role in assisting protein folding. The GroEL-GroES system forms a nano-cage that allows encapsulation of the non-native substrate proteins and provides a physical environment optimized to promote and accelerate protein folding. GroES binds to the apical surface of the GroEL ring, thereby capping the opening of the GroEL channel.</text>
</comment>
<comment type="subunit">
    <text evidence="1">Heptamer of 7 subunits arranged in a ring. Interacts with the chaperonin GroEL.</text>
</comment>
<comment type="subcellular location">
    <subcellularLocation>
        <location evidence="1">Cytoplasm</location>
    </subcellularLocation>
</comment>
<comment type="similarity">
    <text evidence="1">Belongs to the GroES chaperonin family.</text>
</comment>
<keyword id="KW-0143">Chaperone</keyword>
<keyword id="KW-0963">Cytoplasm</keyword>
<name>CH10_SHEB8</name>
<reference key="1">
    <citation type="submission" date="2007-07" db="EMBL/GenBank/DDBJ databases">
        <title>Complete sequence of chromosome of Shewanella baltica OS185.</title>
        <authorList>
            <consortium name="US DOE Joint Genome Institute"/>
            <person name="Copeland A."/>
            <person name="Lucas S."/>
            <person name="Lapidus A."/>
            <person name="Barry K."/>
            <person name="Glavina del Rio T."/>
            <person name="Dalin E."/>
            <person name="Tice H."/>
            <person name="Pitluck S."/>
            <person name="Sims D."/>
            <person name="Brettin T."/>
            <person name="Bruce D."/>
            <person name="Detter J.C."/>
            <person name="Han C."/>
            <person name="Schmutz J."/>
            <person name="Larimer F."/>
            <person name="Land M."/>
            <person name="Hauser L."/>
            <person name="Kyrpides N."/>
            <person name="Mikhailova N."/>
            <person name="Brettar I."/>
            <person name="Rodrigues J."/>
            <person name="Konstantinidis K."/>
            <person name="Tiedje J."/>
            <person name="Richardson P."/>
        </authorList>
    </citation>
    <scope>NUCLEOTIDE SEQUENCE [LARGE SCALE GENOMIC DNA]</scope>
    <source>
        <strain>OS185</strain>
    </source>
</reference>
<evidence type="ECO:0000255" key="1">
    <source>
        <dbReference type="HAMAP-Rule" id="MF_00580"/>
    </source>
</evidence>
<feature type="chain" id="PRO_1000025360" description="Co-chaperonin GroES">
    <location>
        <begin position="1"/>
        <end position="96"/>
    </location>
</feature>
<dbReference type="EMBL" id="CP000753">
    <property type="protein sequence ID" value="ABS06805.1"/>
    <property type="molecule type" value="Genomic_DNA"/>
</dbReference>
<dbReference type="RefSeq" id="WP_006086113.1">
    <property type="nucleotide sequence ID" value="NC_009665.1"/>
</dbReference>
<dbReference type="SMR" id="A6WJ16"/>
<dbReference type="KEGG" id="sbm:Shew185_0644"/>
<dbReference type="HOGENOM" id="CLU_132825_1_1_6"/>
<dbReference type="GO" id="GO:0005737">
    <property type="term" value="C:cytoplasm"/>
    <property type="evidence" value="ECO:0007669"/>
    <property type="project" value="UniProtKB-SubCell"/>
</dbReference>
<dbReference type="GO" id="GO:0005524">
    <property type="term" value="F:ATP binding"/>
    <property type="evidence" value="ECO:0007669"/>
    <property type="project" value="InterPro"/>
</dbReference>
<dbReference type="GO" id="GO:0046872">
    <property type="term" value="F:metal ion binding"/>
    <property type="evidence" value="ECO:0007669"/>
    <property type="project" value="TreeGrafter"/>
</dbReference>
<dbReference type="GO" id="GO:0044183">
    <property type="term" value="F:protein folding chaperone"/>
    <property type="evidence" value="ECO:0007669"/>
    <property type="project" value="InterPro"/>
</dbReference>
<dbReference type="GO" id="GO:0051087">
    <property type="term" value="F:protein-folding chaperone binding"/>
    <property type="evidence" value="ECO:0007669"/>
    <property type="project" value="TreeGrafter"/>
</dbReference>
<dbReference type="GO" id="GO:0051082">
    <property type="term" value="F:unfolded protein binding"/>
    <property type="evidence" value="ECO:0007669"/>
    <property type="project" value="TreeGrafter"/>
</dbReference>
<dbReference type="GO" id="GO:0051085">
    <property type="term" value="P:chaperone cofactor-dependent protein refolding"/>
    <property type="evidence" value="ECO:0007669"/>
    <property type="project" value="TreeGrafter"/>
</dbReference>
<dbReference type="CDD" id="cd00320">
    <property type="entry name" value="cpn10"/>
    <property type="match status" value="1"/>
</dbReference>
<dbReference type="FunFam" id="2.30.33.40:FF:000001">
    <property type="entry name" value="10 kDa chaperonin"/>
    <property type="match status" value="1"/>
</dbReference>
<dbReference type="Gene3D" id="2.30.33.40">
    <property type="entry name" value="GroES chaperonin"/>
    <property type="match status" value="1"/>
</dbReference>
<dbReference type="HAMAP" id="MF_00580">
    <property type="entry name" value="CH10"/>
    <property type="match status" value="1"/>
</dbReference>
<dbReference type="InterPro" id="IPR020818">
    <property type="entry name" value="Chaperonin_GroES"/>
</dbReference>
<dbReference type="InterPro" id="IPR037124">
    <property type="entry name" value="Chaperonin_GroES_sf"/>
</dbReference>
<dbReference type="InterPro" id="IPR018369">
    <property type="entry name" value="Chaprnonin_Cpn10_CS"/>
</dbReference>
<dbReference type="InterPro" id="IPR011032">
    <property type="entry name" value="GroES-like_sf"/>
</dbReference>
<dbReference type="NCBIfam" id="NF001526">
    <property type="entry name" value="PRK00364.1-1"/>
    <property type="match status" value="1"/>
</dbReference>
<dbReference type="NCBIfam" id="NF001527">
    <property type="entry name" value="PRK00364.1-2"/>
    <property type="match status" value="1"/>
</dbReference>
<dbReference type="NCBIfam" id="NF001531">
    <property type="entry name" value="PRK00364.2-2"/>
    <property type="match status" value="1"/>
</dbReference>
<dbReference type="PANTHER" id="PTHR10772">
    <property type="entry name" value="10 KDA HEAT SHOCK PROTEIN"/>
    <property type="match status" value="1"/>
</dbReference>
<dbReference type="PANTHER" id="PTHR10772:SF58">
    <property type="entry name" value="CO-CHAPERONIN GROES"/>
    <property type="match status" value="1"/>
</dbReference>
<dbReference type="Pfam" id="PF00166">
    <property type="entry name" value="Cpn10"/>
    <property type="match status" value="1"/>
</dbReference>
<dbReference type="PRINTS" id="PR00297">
    <property type="entry name" value="CHAPERONIN10"/>
</dbReference>
<dbReference type="SMART" id="SM00883">
    <property type="entry name" value="Cpn10"/>
    <property type="match status" value="1"/>
</dbReference>
<dbReference type="SUPFAM" id="SSF50129">
    <property type="entry name" value="GroES-like"/>
    <property type="match status" value="1"/>
</dbReference>
<dbReference type="PROSITE" id="PS00681">
    <property type="entry name" value="CHAPERONINS_CPN10"/>
    <property type="match status" value="1"/>
</dbReference>
<gene>
    <name evidence="1" type="primary">groES</name>
    <name evidence="1" type="synonym">groS</name>
    <name type="ordered locus">Shew185_0644</name>
</gene>
<proteinExistence type="inferred from homology"/>
<protein>
    <recommendedName>
        <fullName evidence="1">Co-chaperonin GroES</fullName>
    </recommendedName>
    <alternativeName>
        <fullName evidence="1">10 kDa chaperonin</fullName>
    </alternativeName>
    <alternativeName>
        <fullName evidence="1">Chaperonin-10</fullName>
        <shortName evidence="1">Cpn10</shortName>
    </alternativeName>
</protein>
<organism>
    <name type="scientific">Shewanella baltica (strain OS185)</name>
    <dbReference type="NCBI Taxonomy" id="402882"/>
    <lineage>
        <taxon>Bacteria</taxon>
        <taxon>Pseudomonadati</taxon>
        <taxon>Pseudomonadota</taxon>
        <taxon>Gammaproteobacteria</taxon>
        <taxon>Alteromonadales</taxon>
        <taxon>Shewanellaceae</taxon>
        <taxon>Shewanella</taxon>
    </lineage>
</organism>
<sequence length="96" mass="10185">MNIRPLHDRVIVKRLEVESTSAGGIVLTGSAAEKSTRGEILAVGNGRILENGTVKPLDVKVGDVVIFNEGYGVKKEKIDGQEVLILSEADLMAVVG</sequence>